<sequence>MLMQPLTFLTCVYLWYSAALCVEVKIVRTDLLSSASVGR</sequence>
<protein>
    <recommendedName>
        <fullName>Uncharacterized protein TP_0759</fullName>
    </recommendedName>
</protein>
<keyword id="KW-1185">Reference proteome</keyword>
<organism>
    <name type="scientific">Treponema pallidum (strain Nichols)</name>
    <dbReference type="NCBI Taxonomy" id="243276"/>
    <lineage>
        <taxon>Bacteria</taxon>
        <taxon>Pseudomonadati</taxon>
        <taxon>Spirochaetota</taxon>
        <taxon>Spirochaetia</taxon>
        <taxon>Spirochaetales</taxon>
        <taxon>Treponemataceae</taxon>
        <taxon>Treponema</taxon>
    </lineage>
</organism>
<name>Y759_TREPA</name>
<accession>O83740</accession>
<feature type="chain" id="PRO_0000202316" description="Uncharacterized protein TP_0759">
    <location>
        <begin position="1"/>
        <end position="39"/>
    </location>
</feature>
<dbReference type="EMBL" id="AE000520">
    <property type="protein sequence ID" value="AAC65731.1"/>
    <property type="molecule type" value="Genomic_DNA"/>
</dbReference>
<dbReference type="PIR" id="B71285">
    <property type="entry name" value="B71285"/>
</dbReference>
<dbReference type="IntAct" id="O83740">
    <property type="interactions" value="1"/>
</dbReference>
<dbReference type="STRING" id="243276.TP_0759"/>
<dbReference type="EnsemblBacteria" id="AAC65731">
    <property type="protein sequence ID" value="AAC65731"/>
    <property type="gene ID" value="TP_0759"/>
</dbReference>
<dbReference type="KEGG" id="tpa:TP_0759"/>
<dbReference type="HOGENOM" id="CLU_3318672_0_0_12"/>
<dbReference type="Proteomes" id="UP000000811">
    <property type="component" value="Chromosome"/>
</dbReference>
<gene>
    <name type="ordered locus">TP_0759</name>
</gene>
<reference key="1">
    <citation type="journal article" date="1998" name="Science">
        <title>Complete genome sequence of Treponema pallidum, the syphilis spirochete.</title>
        <authorList>
            <person name="Fraser C.M."/>
            <person name="Norris S.J."/>
            <person name="Weinstock G.M."/>
            <person name="White O."/>
            <person name="Sutton G.G."/>
            <person name="Dodson R.J."/>
            <person name="Gwinn M.L."/>
            <person name="Hickey E.K."/>
            <person name="Clayton R.A."/>
            <person name="Ketchum K.A."/>
            <person name="Sodergren E."/>
            <person name="Hardham J.M."/>
            <person name="McLeod M.P."/>
            <person name="Salzberg S.L."/>
            <person name="Peterson J.D."/>
            <person name="Khalak H.G."/>
            <person name="Richardson D.L."/>
            <person name="Howell J.K."/>
            <person name="Chidambaram M."/>
            <person name="Utterback T.R."/>
            <person name="McDonald L.A."/>
            <person name="Artiach P."/>
            <person name="Bowman C."/>
            <person name="Cotton M.D."/>
            <person name="Fujii C."/>
            <person name="Garland S.A."/>
            <person name="Hatch B."/>
            <person name="Horst K."/>
            <person name="Roberts K.M."/>
            <person name="Sandusky M."/>
            <person name="Weidman J.F."/>
            <person name="Smith H.O."/>
            <person name="Venter J.C."/>
        </authorList>
    </citation>
    <scope>NUCLEOTIDE SEQUENCE [LARGE SCALE GENOMIC DNA]</scope>
    <source>
        <strain>Nichols</strain>
    </source>
</reference>
<proteinExistence type="predicted"/>